<proteinExistence type="inferred from homology"/>
<organism>
    <name type="scientific">Salmonella gallinarum (strain 287/91 / NCTC 13346)</name>
    <dbReference type="NCBI Taxonomy" id="550538"/>
    <lineage>
        <taxon>Bacteria</taxon>
        <taxon>Pseudomonadati</taxon>
        <taxon>Pseudomonadota</taxon>
        <taxon>Gammaproteobacteria</taxon>
        <taxon>Enterobacterales</taxon>
        <taxon>Enterobacteriaceae</taxon>
        <taxon>Salmonella</taxon>
    </lineage>
</organism>
<reference key="1">
    <citation type="journal article" date="2008" name="Genome Res.">
        <title>Comparative genome analysis of Salmonella enteritidis PT4 and Salmonella gallinarum 287/91 provides insights into evolutionary and host adaptation pathways.</title>
        <authorList>
            <person name="Thomson N.R."/>
            <person name="Clayton D.J."/>
            <person name="Windhorst D."/>
            <person name="Vernikos G."/>
            <person name="Davidson S."/>
            <person name="Churcher C."/>
            <person name="Quail M.A."/>
            <person name="Stevens M."/>
            <person name="Jones M.A."/>
            <person name="Watson M."/>
            <person name="Barron A."/>
            <person name="Layton A."/>
            <person name="Pickard D."/>
            <person name="Kingsley R.A."/>
            <person name="Bignell A."/>
            <person name="Clark L."/>
            <person name="Harris B."/>
            <person name="Ormond D."/>
            <person name="Abdellah Z."/>
            <person name="Brooks K."/>
            <person name="Cherevach I."/>
            <person name="Chillingworth T."/>
            <person name="Woodward J."/>
            <person name="Norberczak H."/>
            <person name="Lord A."/>
            <person name="Arrowsmith C."/>
            <person name="Jagels K."/>
            <person name="Moule S."/>
            <person name="Mungall K."/>
            <person name="Saunders M."/>
            <person name="Whitehead S."/>
            <person name="Chabalgoity J.A."/>
            <person name="Maskell D."/>
            <person name="Humphreys T."/>
            <person name="Roberts M."/>
            <person name="Barrow P.A."/>
            <person name="Dougan G."/>
            <person name="Parkhill J."/>
        </authorList>
    </citation>
    <scope>NUCLEOTIDE SEQUENCE [LARGE SCALE GENOMIC DNA]</scope>
    <source>
        <strain>287/91 / NCTC 13346</strain>
    </source>
</reference>
<accession>B5RCZ5</accession>
<name>NDK_SALG2</name>
<feature type="chain" id="PRO_1000125012" description="Nucleoside diphosphate kinase">
    <location>
        <begin position="1"/>
        <end position="143"/>
    </location>
</feature>
<feature type="active site" description="Pros-phosphohistidine intermediate" evidence="1">
    <location>
        <position position="117"/>
    </location>
</feature>
<feature type="binding site" evidence="1">
    <location>
        <position position="11"/>
    </location>
    <ligand>
        <name>ATP</name>
        <dbReference type="ChEBI" id="CHEBI:30616"/>
    </ligand>
</feature>
<feature type="binding site" evidence="1">
    <location>
        <position position="59"/>
    </location>
    <ligand>
        <name>ATP</name>
        <dbReference type="ChEBI" id="CHEBI:30616"/>
    </ligand>
</feature>
<feature type="binding site" evidence="1">
    <location>
        <position position="87"/>
    </location>
    <ligand>
        <name>ATP</name>
        <dbReference type="ChEBI" id="CHEBI:30616"/>
    </ligand>
</feature>
<feature type="binding site" evidence="1">
    <location>
        <position position="93"/>
    </location>
    <ligand>
        <name>ATP</name>
        <dbReference type="ChEBI" id="CHEBI:30616"/>
    </ligand>
</feature>
<feature type="binding site" evidence="1">
    <location>
        <position position="104"/>
    </location>
    <ligand>
        <name>ATP</name>
        <dbReference type="ChEBI" id="CHEBI:30616"/>
    </ligand>
</feature>
<feature type="binding site" evidence="1">
    <location>
        <position position="114"/>
    </location>
    <ligand>
        <name>ATP</name>
        <dbReference type="ChEBI" id="CHEBI:30616"/>
    </ligand>
</feature>
<gene>
    <name evidence="1" type="primary">ndk</name>
    <name type="ordered locus">SG2561</name>
</gene>
<comment type="function">
    <text evidence="1">Major role in the synthesis of nucleoside triphosphates other than ATP. The ATP gamma phosphate is transferred to the NDP beta phosphate via a ping-pong mechanism, using a phosphorylated active-site intermediate.</text>
</comment>
<comment type="catalytic activity">
    <reaction evidence="1">
        <text>a 2'-deoxyribonucleoside 5'-diphosphate + ATP = a 2'-deoxyribonucleoside 5'-triphosphate + ADP</text>
        <dbReference type="Rhea" id="RHEA:44640"/>
        <dbReference type="ChEBI" id="CHEBI:30616"/>
        <dbReference type="ChEBI" id="CHEBI:61560"/>
        <dbReference type="ChEBI" id="CHEBI:73316"/>
        <dbReference type="ChEBI" id="CHEBI:456216"/>
        <dbReference type="EC" id="2.7.4.6"/>
    </reaction>
</comment>
<comment type="catalytic activity">
    <reaction evidence="1">
        <text>a ribonucleoside 5'-diphosphate + ATP = a ribonucleoside 5'-triphosphate + ADP</text>
        <dbReference type="Rhea" id="RHEA:18113"/>
        <dbReference type="ChEBI" id="CHEBI:30616"/>
        <dbReference type="ChEBI" id="CHEBI:57930"/>
        <dbReference type="ChEBI" id="CHEBI:61557"/>
        <dbReference type="ChEBI" id="CHEBI:456216"/>
        <dbReference type="EC" id="2.7.4.6"/>
    </reaction>
</comment>
<comment type="cofactor">
    <cofactor evidence="1">
        <name>Mg(2+)</name>
        <dbReference type="ChEBI" id="CHEBI:18420"/>
    </cofactor>
</comment>
<comment type="subunit">
    <text evidence="1">Homotetramer.</text>
</comment>
<comment type="subcellular location">
    <subcellularLocation>
        <location evidence="1">Cytoplasm</location>
    </subcellularLocation>
</comment>
<comment type="similarity">
    <text evidence="1">Belongs to the NDK family.</text>
</comment>
<evidence type="ECO:0000255" key="1">
    <source>
        <dbReference type="HAMAP-Rule" id="MF_00451"/>
    </source>
</evidence>
<sequence>MAIERTFSIIKPNAVAKNVIGSIFARFEAAGFKIVGTKMLHLTVEQARGFYAEHDGKPFFDGLVEFMTSGPIVVSVLESENAVQRHRDLLGATNPANALAGTLRADYADSLTENGTHGSDSLESAQREIAFFFGEGEVCPRTR</sequence>
<dbReference type="EC" id="2.7.4.6" evidence="1"/>
<dbReference type="EMBL" id="AM933173">
    <property type="protein sequence ID" value="CAR38381.1"/>
    <property type="molecule type" value="Genomic_DNA"/>
</dbReference>
<dbReference type="RefSeq" id="WP_000963846.1">
    <property type="nucleotide sequence ID" value="NC_011274.1"/>
</dbReference>
<dbReference type="SMR" id="B5RCZ5"/>
<dbReference type="KEGG" id="seg:SG2561"/>
<dbReference type="HOGENOM" id="CLU_060216_8_1_6"/>
<dbReference type="Proteomes" id="UP000008321">
    <property type="component" value="Chromosome"/>
</dbReference>
<dbReference type="GO" id="GO:0005737">
    <property type="term" value="C:cytoplasm"/>
    <property type="evidence" value="ECO:0007669"/>
    <property type="project" value="UniProtKB-SubCell"/>
</dbReference>
<dbReference type="GO" id="GO:0005524">
    <property type="term" value="F:ATP binding"/>
    <property type="evidence" value="ECO:0007669"/>
    <property type="project" value="UniProtKB-UniRule"/>
</dbReference>
<dbReference type="GO" id="GO:0046872">
    <property type="term" value="F:metal ion binding"/>
    <property type="evidence" value="ECO:0007669"/>
    <property type="project" value="UniProtKB-KW"/>
</dbReference>
<dbReference type="GO" id="GO:0004550">
    <property type="term" value="F:nucleoside diphosphate kinase activity"/>
    <property type="evidence" value="ECO:0007669"/>
    <property type="project" value="UniProtKB-UniRule"/>
</dbReference>
<dbReference type="GO" id="GO:0006241">
    <property type="term" value="P:CTP biosynthetic process"/>
    <property type="evidence" value="ECO:0007669"/>
    <property type="project" value="UniProtKB-UniRule"/>
</dbReference>
<dbReference type="GO" id="GO:0006183">
    <property type="term" value="P:GTP biosynthetic process"/>
    <property type="evidence" value="ECO:0007669"/>
    <property type="project" value="UniProtKB-UniRule"/>
</dbReference>
<dbReference type="GO" id="GO:0006228">
    <property type="term" value="P:UTP biosynthetic process"/>
    <property type="evidence" value="ECO:0007669"/>
    <property type="project" value="UniProtKB-UniRule"/>
</dbReference>
<dbReference type="CDD" id="cd04413">
    <property type="entry name" value="NDPk_I"/>
    <property type="match status" value="1"/>
</dbReference>
<dbReference type="FunFam" id="3.30.70.141:FF:000001">
    <property type="entry name" value="Nucleoside diphosphate kinase"/>
    <property type="match status" value="1"/>
</dbReference>
<dbReference type="Gene3D" id="3.30.70.141">
    <property type="entry name" value="Nucleoside diphosphate kinase-like domain"/>
    <property type="match status" value="1"/>
</dbReference>
<dbReference type="HAMAP" id="MF_00451">
    <property type="entry name" value="NDP_kinase"/>
    <property type="match status" value="1"/>
</dbReference>
<dbReference type="InterPro" id="IPR034907">
    <property type="entry name" value="NDK-like_dom"/>
</dbReference>
<dbReference type="InterPro" id="IPR036850">
    <property type="entry name" value="NDK-like_dom_sf"/>
</dbReference>
<dbReference type="InterPro" id="IPR001564">
    <property type="entry name" value="Nucleoside_diP_kinase"/>
</dbReference>
<dbReference type="InterPro" id="IPR023005">
    <property type="entry name" value="Nucleoside_diP_kinase_AS"/>
</dbReference>
<dbReference type="NCBIfam" id="NF001908">
    <property type="entry name" value="PRK00668.1"/>
    <property type="match status" value="1"/>
</dbReference>
<dbReference type="PANTHER" id="PTHR46161">
    <property type="entry name" value="NUCLEOSIDE DIPHOSPHATE KINASE"/>
    <property type="match status" value="1"/>
</dbReference>
<dbReference type="PANTHER" id="PTHR46161:SF3">
    <property type="entry name" value="NUCLEOSIDE DIPHOSPHATE KINASE DDB_G0292928-RELATED"/>
    <property type="match status" value="1"/>
</dbReference>
<dbReference type="Pfam" id="PF00334">
    <property type="entry name" value="NDK"/>
    <property type="match status" value="1"/>
</dbReference>
<dbReference type="PRINTS" id="PR01243">
    <property type="entry name" value="NUCDPKINASE"/>
</dbReference>
<dbReference type="SMART" id="SM00562">
    <property type="entry name" value="NDK"/>
    <property type="match status" value="1"/>
</dbReference>
<dbReference type="SUPFAM" id="SSF54919">
    <property type="entry name" value="Nucleoside diphosphate kinase, NDK"/>
    <property type="match status" value="1"/>
</dbReference>
<dbReference type="PROSITE" id="PS00469">
    <property type="entry name" value="NDPK"/>
    <property type="match status" value="1"/>
</dbReference>
<dbReference type="PROSITE" id="PS51374">
    <property type="entry name" value="NDPK_LIKE"/>
    <property type="match status" value="1"/>
</dbReference>
<keyword id="KW-0067">ATP-binding</keyword>
<keyword id="KW-0963">Cytoplasm</keyword>
<keyword id="KW-0418">Kinase</keyword>
<keyword id="KW-0460">Magnesium</keyword>
<keyword id="KW-0479">Metal-binding</keyword>
<keyword id="KW-0546">Nucleotide metabolism</keyword>
<keyword id="KW-0547">Nucleotide-binding</keyword>
<keyword id="KW-0597">Phosphoprotein</keyword>
<keyword id="KW-0808">Transferase</keyword>
<protein>
    <recommendedName>
        <fullName evidence="1">Nucleoside diphosphate kinase</fullName>
        <shortName evidence="1">NDK</shortName>
        <shortName evidence="1">NDP kinase</shortName>
        <ecNumber evidence="1">2.7.4.6</ecNumber>
    </recommendedName>
    <alternativeName>
        <fullName evidence="1">Nucleoside-2-P kinase</fullName>
    </alternativeName>
</protein>